<protein>
    <recommendedName>
        <fullName evidence="5">DDIT3 upstream open reading frame protein</fullName>
    </recommendedName>
    <alternativeName>
        <fullName evidence="1">Alternative DDIT3 proteins</fullName>
        <shortName evidence="1">AltDDIT3</shortName>
    </alternativeName>
</protein>
<comment type="function">
    <molecule>Isoform AltDDIT3</molecule>
    <text evidence="4">Product of the upstream open reading frame (uORF) of DDIT3/CHOP that is specifically produced in absence of stress, thereby preventing translation of downstream stress effector DDIT3/CHOP.</text>
</comment>
<comment type="subunit">
    <text evidence="1">Interacts with DDIT3 (isoform 1).</text>
</comment>
<comment type="subcellular location">
    <subcellularLocation>
        <location evidence="3">Nucleus</location>
    </subcellularLocation>
    <subcellularLocation>
        <location evidence="3">Cytoplasm</location>
    </subcellularLocation>
    <text evidence="2">Colocalizes with WDR83 in the cytoplasm.</text>
</comment>
<comment type="alternative products">
    <event type="alternative initiation"/>
    <isoform>
        <id>A0A2R8VHR8-1</id>
        <name>AltDDIT3</name>
        <sequence type="displayed"/>
    </isoform>
    <isoform>
        <id>P35639-1</id>
        <name>1</name>
        <sequence type="external"/>
    </isoform>
</comment>
<comment type="induction">
    <molecule>Isoform AltDDIT3</molecule>
    <text evidence="4">Produced in absence of stress: this uORF is translated, thereby preventing translation of downstream ORF, the stress effector DDIT3/CHOP (PubMed:21285359). This uORF is not translated in response to stress (PubMed:21285359).</text>
</comment>
<comment type="miscellaneous">
    <molecule>Isoform AltDDIT3</molecule>
    <text evidence="1">Product of the upstream open reading frame of this bicistronic gene.</text>
</comment>
<proteinExistence type="evidence at transcript level"/>
<sequence>MLKMSGWQRQSQNNSRNLRRECSRRKCIFIHHHT</sequence>
<accession>A0A2R8VHR8</accession>
<feature type="chain" id="PRO_0000450345" description="DDIT3 upstream open reading frame protein">
    <location>
        <begin position="1"/>
        <end position="34"/>
    </location>
</feature>
<name>DT3UO_MOUSE</name>
<reference key="1">
    <citation type="journal article" date="2009" name="PLoS Biol.">
        <title>Lineage-specific biology revealed by a finished genome assembly of the mouse.</title>
        <authorList>
            <person name="Church D.M."/>
            <person name="Goodstadt L."/>
            <person name="Hillier L.W."/>
            <person name="Zody M.C."/>
            <person name="Goldstein S."/>
            <person name="She X."/>
            <person name="Bult C.J."/>
            <person name="Agarwala R."/>
            <person name="Cherry J.L."/>
            <person name="DiCuccio M."/>
            <person name="Hlavina W."/>
            <person name="Kapustin Y."/>
            <person name="Meric P."/>
            <person name="Maglott D."/>
            <person name="Birtle Z."/>
            <person name="Marques A.C."/>
            <person name="Graves T."/>
            <person name="Zhou S."/>
            <person name="Teague B."/>
            <person name="Potamousis K."/>
            <person name="Churas C."/>
            <person name="Place M."/>
            <person name="Herschleb J."/>
            <person name="Runnheim R."/>
            <person name="Forrest D."/>
            <person name="Amos-Landgraf J."/>
            <person name="Schwartz D.C."/>
            <person name="Cheng Z."/>
            <person name="Lindblad-Toh K."/>
            <person name="Eichler E.E."/>
            <person name="Ponting C.P."/>
        </authorList>
    </citation>
    <scope>NUCLEOTIDE SEQUENCE [LARGE SCALE GENOMIC DNA]</scope>
    <source>
        <strain>C57BL/6J</strain>
    </source>
</reference>
<reference key="2">
    <citation type="journal article" date="2011" name="J. Biol. Chem.">
        <title>Phosphorylation of eIF2 facilitates ribosomal bypass of an inhibitory upstream ORF to enhance CHOP translation.</title>
        <authorList>
            <person name="Palam L.R."/>
            <person name="Baird T.D."/>
            <person name="Wek R.C."/>
        </authorList>
    </citation>
    <scope>FUNCTION</scope>
    <scope>INDUCTION</scope>
</reference>
<organism>
    <name type="scientific">Mus musculus</name>
    <name type="common">Mouse</name>
    <dbReference type="NCBI Taxonomy" id="10090"/>
    <lineage>
        <taxon>Eukaryota</taxon>
        <taxon>Metazoa</taxon>
        <taxon>Chordata</taxon>
        <taxon>Craniata</taxon>
        <taxon>Vertebrata</taxon>
        <taxon>Euteleostomi</taxon>
        <taxon>Mammalia</taxon>
        <taxon>Eutheria</taxon>
        <taxon>Euarchontoglires</taxon>
        <taxon>Glires</taxon>
        <taxon>Rodentia</taxon>
        <taxon>Myomorpha</taxon>
        <taxon>Muroidea</taxon>
        <taxon>Muridae</taxon>
        <taxon>Murinae</taxon>
        <taxon>Mus</taxon>
        <taxon>Mus</taxon>
    </lineage>
</organism>
<gene>
    <name evidence="6" type="primary">Ddit3</name>
</gene>
<evidence type="ECO:0000250" key="1">
    <source>
        <dbReference type="UniProtKB" id="P0DPQ6"/>
    </source>
</evidence>
<evidence type="ECO:0000250" key="2">
    <source>
        <dbReference type="UniProtKB" id="Q62630"/>
    </source>
</evidence>
<evidence type="ECO:0000250" key="3">
    <source>
        <dbReference type="UniProtKB" id="Q9H6Z9"/>
    </source>
</evidence>
<evidence type="ECO:0000269" key="4">
    <source>
    </source>
</evidence>
<evidence type="ECO:0000305" key="5"/>
<evidence type="ECO:0000312" key="6">
    <source>
        <dbReference type="MGI" id="MGI:109247"/>
    </source>
</evidence>
<keyword id="KW-0024">Alternative initiation</keyword>
<keyword id="KW-0963">Cytoplasm</keyword>
<keyword id="KW-0539">Nucleus</keyword>
<keyword id="KW-1185">Reference proteome</keyword>
<dbReference type="EMBL" id="AC144852">
    <property type="status" value="NOT_ANNOTATED_CDS"/>
    <property type="molecule type" value="Genomic_DNA"/>
</dbReference>
<dbReference type="STRING" id="10090.ENSMUSP00000155363"/>
<dbReference type="Ensembl" id="ENSMUST00000230446.2">
    <molecule id="A0A2R8VHR8-1"/>
    <property type="protein sequence ID" value="ENSMUSP00000155363.2"/>
    <property type="gene ID" value="ENSMUSG00000116429.2"/>
</dbReference>
<dbReference type="AGR" id="MGI:109247"/>
<dbReference type="MGI" id="MGI:109247">
    <property type="gene designation" value="Ddit3"/>
</dbReference>
<dbReference type="VEuPathDB" id="HostDB:ENSMUSG00000116429"/>
<dbReference type="GeneTree" id="ENSGT01090000261933"/>
<dbReference type="ChiTaRS" id="Ddit3">
    <property type="organism name" value="mouse"/>
</dbReference>
<dbReference type="Proteomes" id="UP000000589">
    <property type="component" value="Chromosome 10"/>
</dbReference>
<dbReference type="Bgee" id="ENSMUSG00000116429">
    <property type="expression patterns" value="Expressed in embryonic brain and 30 other cell types or tissues"/>
</dbReference>
<dbReference type="GO" id="GO:0005770">
    <property type="term" value="C:late endosome"/>
    <property type="evidence" value="ECO:0000314"/>
    <property type="project" value="MGI"/>
</dbReference>
<dbReference type="GO" id="GO:0005634">
    <property type="term" value="C:nucleus"/>
    <property type="evidence" value="ECO:0000314"/>
    <property type="project" value="MGI"/>
</dbReference>
<dbReference type="GO" id="GO:0003677">
    <property type="term" value="F:DNA binding"/>
    <property type="evidence" value="ECO:0000314"/>
    <property type="project" value="MGI"/>
</dbReference>
<dbReference type="GO" id="GO:0003700">
    <property type="term" value="F:DNA-binding transcription factor activity"/>
    <property type="evidence" value="ECO:0000315"/>
    <property type="project" value="MGI"/>
</dbReference>
<dbReference type="GO" id="GO:0060840">
    <property type="term" value="P:artery development"/>
    <property type="evidence" value="ECO:0000315"/>
    <property type="project" value="MGI"/>
</dbReference>
<dbReference type="GO" id="GO:0070509">
    <property type="term" value="P:calcium ion import"/>
    <property type="evidence" value="ECO:0000316"/>
    <property type="project" value="MGI"/>
</dbReference>
<dbReference type="GO" id="GO:0045454">
    <property type="term" value="P:cell redox homeostasis"/>
    <property type="evidence" value="ECO:0000266"/>
    <property type="project" value="MGI"/>
</dbReference>
<dbReference type="GO" id="GO:0002086">
    <property type="term" value="P:diaphragm contraction"/>
    <property type="evidence" value="ECO:0000316"/>
    <property type="project" value="MGI"/>
</dbReference>
<dbReference type="GO" id="GO:0030968">
    <property type="term" value="P:endoplasmic reticulum unfolded protein response"/>
    <property type="evidence" value="ECO:0000315"/>
    <property type="project" value="MGI"/>
</dbReference>
<dbReference type="GO" id="GO:0006983">
    <property type="term" value="P:ER overload response"/>
    <property type="evidence" value="ECO:0000315"/>
    <property type="project" value="MGI"/>
</dbReference>
<dbReference type="GO" id="GO:0010467">
    <property type="term" value="P:gene expression"/>
    <property type="evidence" value="ECO:0000316"/>
    <property type="project" value="MGI"/>
</dbReference>
<dbReference type="GO" id="GO:0070059">
    <property type="term" value="P:intrinsic apoptotic signaling pathway in response to endoplasmic reticulum stress"/>
    <property type="evidence" value="ECO:0000315"/>
    <property type="project" value="MGI"/>
</dbReference>
<dbReference type="GO" id="GO:0045599">
    <property type="term" value="P:negative regulation of fat cell differentiation"/>
    <property type="evidence" value="ECO:0000316"/>
    <property type="project" value="MGI"/>
</dbReference>
<dbReference type="GO" id="GO:0006355">
    <property type="term" value="P:regulation of DNA-templated transcription"/>
    <property type="evidence" value="ECO:0000315"/>
    <property type="project" value="MGI"/>
</dbReference>
<dbReference type="GO" id="GO:0006357">
    <property type="term" value="P:regulation of transcription by RNA polymerase II"/>
    <property type="evidence" value="ECO:0000266"/>
    <property type="project" value="MGI"/>
</dbReference>
<dbReference type="GO" id="GO:0061771">
    <property type="term" value="P:response to caloric restriction"/>
    <property type="evidence" value="ECO:0000314"/>
    <property type="project" value="MGI"/>
</dbReference>
<dbReference type="GO" id="GO:0036119">
    <property type="term" value="P:response to platelet-derived growth factor"/>
    <property type="evidence" value="ECO:0000315"/>
    <property type="project" value="MGI"/>
</dbReference>
<dbReference type="GO" id="GO:0009611">
    <property type="term" value="P:response to wounding"/>
    <property type="evidence" value="ECO:0000315"/>
    <property type="project" value="MGI"/>
</dbReference>
<dbReference type="GO" id="GO:0007605">
    <property type="term" value="P:sensory perception of sound"/>
    <property type="evidence" value="ECO:0000316"/>
    <property type="project" value="MGI"/>
</dbReference>
<dbReference type="GO" id="GO:1904738">
    <property type="term" value="P:vascular associated smooth muscle cell migration"/>
    <property type="evidence" value="ECO:0000315"/>
    <property type="project" value="MGI"/>
</dbReference>
<dbReference type="GO" id="GO:1990874">
    <property type="term" value="P:vascular associated smooth muscle cell proliferation"/>
    <property type="evidence" value="ECO:0000315"/>
    <property type="project" value="MGI"/>
</dbReference>